<organism>
    <name type="scientific">Brevibacillus brevis (strain 47 / JCM 6285 / NBRC 100599)</name>
    <dbReference type="NCBI Taxonomy" id="358681"/>
    <lineage>
        <taxon>Bacteria</taxon>
        <taxon>Bacillati</taxon>
        <taxon>Bacillota</taxon>
        <taxon>Bacilli</taxon>
        <taxon>Bacillales</taxon>
        <taxon>Paenibacillaceae</taxon>
        <taxon>Brevibacillus</taxon>
    </lineage>
</organism>
<protein>
    <recommendedName>
        <fullName evidence="1">Phosphatidylserine decarboxylase proenzyme</fullName>
        <ecNumber evidence="1">4.1.1.65</ecNumber>
    </recommendedName>
    <component>
        <recommendedName>
            <fullName evidence="1">Phosphatidylserine decarboxylase alpha chain</fullName>
        </recommendedName>
    </component>
    <component>
        <recommendedName>
            <fullName evidence="1">Phosphatidylserine decarboxylase beta chain</fullName>
        </recommendedName>
    </component>
</protein>
<gene>
    <name evidence="1" type="primary">psd</name>
    <name type="ordered locus">BBR47_06920</name>
</gene>
<sequence>MGKKLLPGLIHRLPQNAMSRTMGKITATPFSRLAIQRYIKHYQIDTSIIEKPASEYRTLKEFFSRRLKPAARPIAPGPDTIVSPVDGTVSQLGDICEGTLIQAKGKDFSVSELLGGSEEEAKRYYGGKFITIYLSPRDYHRIHMPVTGDLSSYCYLPGRLYPVNKLGIENVDRLFARNERLVTHIKTDSLGDMALVKVGALFVGSVKVCYNTATTNIKHGRQTHEKIAGTPRYEKGSELGWFEFGSTVILLLESNELEWATGVEKGKSLLMGQALATKKA</sequence>
<comment type="function">
    <text evidence="1">Catalyzes the formation of phosphatidylethanolamine (PtdEtn) from phosphatidylserine (PtdSer).</text>
</comment>
<comment type="catalytic activity">
    <reaction evidence="1">
        <text>a 1,2-diacyl-sn-glycero-3-phospho-L-serine + H(+) = a 1,2-diacyl-sn-glycero-3-phosphoethanolamine + CO2</text>
        <dbReference type="Rhea" id="RHEA:20828"/>
        <dbReference type="ChEBI" id="CHEBI:15378"/>
        <dbReference type="ChEBI" id="CHEBI:16526"/>
        <dbReference type="ChEBI" id="CHEBI:57262"/>
        <dbReference type="ChEBI" id="CHEBI:64612"/>
        <dbReference type="EC" id="4.1.1.65"/>
    </reaction>
</comment>
<comment type="cofactor">
    <cofactor evidence="1">
        <name>pyruvate</name>
        <dbReference type="ChEBI" id="CHEBI:15361"/>
    </cofactor>
    <text evidence="1">Binds 1 pyruvoyl group covalently per subunit.</text>
</comment>
<comment type="pathway">
    <text evidence="1">Phospholipid metabolism; phosphatidylethanolamine biosynthesis; phosphatidylethanolamine from CDP-diacylglycerol: step 2/2.</text>
</comment>
<comment type="subunit">
    <text evidence="1">Heterodimer of a large membrane-associated beta subunit and a small pyruvoyl-containing alpha subunit.</text>
</comment>
<comment type="subcellular location">
    <subcellularLocation>
        <location evidence="1">Cell membrane</location>
        <topology evidence="1">Peripheral membrane protein</topology>
    </subcellularLocation>
</comment>
<comment type="PTM">
    <text evidence="1">Is synthesized initially as an inactive proenzyme. Formation of the active enzyme involves a self-maturation process in which the active site pyruvoyl group is generated from an internal serine residue via an autocatalytic post-translational modification. Two non-identical subunits are generated from the proenzyme in this reaction, and the pyruvate is formed at the N-terminus of the alpha chain, which is derived from the carboxyl end of the proenzyme. The autoendoproteolytic cleavage occurs by a canonical serine protease mechanism, in which the side chain hydroxyl group of the serine supplies its oxygen atom to form the C-terminus of the beta chain, while the remainder of the serine residue undergoes an oxidative deamination to produce ammonia and the pyruvoyl prosthetic group on the alpha chain. During this reaction, the Ser that is part of the protease active site of the proenzyme becomes the pyruvoyl prosthetic group, which constitutes an essential element of the active site of the mature decarboxylase.</text>
</comment>
<comment type="similarity">
    <text evidence="1">Belongs to the phosphatidylserine decarboxylase family. PSD-B subfamily. Prokaryotic type I sub-subfamily.</text>
</comment>
<reference key="1">
    <citation type="submission" date="2005-03" db="EMBL/GenBank/DDBJ databases">
        <title>Brevibacillus brevis strain 47, complete genome.</title>
        <authorList>
            <person name="Hosoyama A."/>
            <person name="Yamada R."/>
            <person name="Hongo Y."/>
            <person name="Terui Y."/>
            <person name="Ankai A."/>
            <person name="Masuyama W."/>
            <person name="Sekiguchi M."/>
            <person name="Takeda T."/>
            <person name="Asano K."/>
            <person name="Ohji S."/>
            <person name="Ichikawa N."/>
            <person name="Narita S."/>
            <person name="Aoki N."/>
            <person name="Miura H."/>
            <person name="Matsushita S."/>
            <person name="Sekigawa T."/>
            <person name="Yamagata H."/>
            <person name="Yoshikawa H."/>
            <person name="Udaka S."/>
            <person name="Tanikawa S."/>
            <person name="Fujita N."/>
        </authorList>
    </citation>
    <scope>NUCLEOTIDE SEQUENCE [LARGE SCALE GENOMIC DNA]</scope>
    <source>
        <strain>47 / JCM 6285 / NBRC 100599</strain>
    </source>
</reference>
<name>PSD_BREBN</name>
<feature type="chain" id="PRO_1000147595" description="Phosphatidylserine decarboxylase beta chain" evidence="1">
    <location>
        <begin position="1"/>
        <end position="245"/>
    </location>
</feature>
<feature type="chain" id="PRO_1000147596" description="Phosphatidylserine decarboxylase alpha chain" evidence="1">
    <location>
        <begin position="246"/>
        <end position="280"/>
    </location>
</feature>
<feature type="active site" description="Charge relay system; for autoendoproteolytic cleavage activity" evidence="1">
    <location>
        <position position="86"/>
    </location>
</feature>
<feature type="active site" description="Charge relay system; for autoendoproteolytic cleavage activity" evidence="1">
    <location>
        <position position="143"/>
    </location>
</feature>
<feature type="active site" description="Charge relay system; for autoendoproteolytic cleavage activity" evidence="1">
    <location>
        <position position="246"/>
    </location>
</feature>
<feature type="active site" description="Schiff-base intermediate with substrate; via pyruvic acid; for decarboxylase activity" evidence="1">
    <location>
        <position position="246"/>
    </location>
</feature>
<feature type="site" description="Cleavage (non-hydrolytic); by autocatalysis" evidence="1">
    <location>
        <begin position="245"/>
        <end position="246"/>
    </location>
</feature>
<feature type="modified residue" description="Pyruvic acid (Ser); by autocatalysis" evidence="1">
    <location>
        <position position="246"/>
    </location>
</feature>
<accession>C0Z4E2</accession>
<dbReference type="EC" id="4.1.1.65" evidence="1"/>
<dbReference type="EMBL" id="AP008955">
    <property type="protein sequence ID" value="BAH41669.1"/>
    <property type="molecule type" value="Genomic_DNA"/>
</dbReference>
<dbReference type="RefSeq" id="WP_012684433.1">
    <property type="nucleotide sequence ID" value="NC_012491.1"/>
</dbReference>
<dbReference type="SMR" id="C0Z4E2"/>
<dbReference type="STRING" id="358681.BBR47_06920"/>
<dbReference type="KEGG" id="bbe:BBR47_06920"/>
<dbReference type="eggNOG" id="COG0688">
    <property type="taxonomic scope" value="Bacteria"/>
</dbReference>
<dbReference type="HOGENOM" id="CLU_029061_4_0_9"/>
<dbReference type="UniPathway" id="UPA00558">
    <property type="reaction ID" value="UER00616"/>
</dbReference>
<dbReference type="Proteomes" id="UP000001877">
    <property type="component" value="Chromosome"/>
</dbReference>
<dbReference type="GO" id="GO:0005886">
    <property type="term" value="C:plasma membrane"/>
    <property type="evidence" value="ECO:0007669"/>
    <property type="project" value="UniProtKB-SubCell"/>
</dbReference>
<dbReference type="GO" id="GO:0004609">
    <property type="term" value="F:phosphatidylserine decarboxylase activity"/>
    <property type="evidence" value="ECO:0007669"/>
    <property type="project" value="UniProtKB-UniRule"/>
</dbReference>
<dbReference type="GO" id="GO:0006646">
    <property type="term" value="P:phosphatidylethanolamine biosynthetic process"/>
    <property type="evidence" value="ECO:0007669"/>
    <property type="project" value="UniProtKB-UniRule"/>
</dbReference>
<dbReference type="HAMAP" id="MF_00662">
    <property type="entry name" value="PS_decarb_PSD_B_type1"/>
    <property type="match status" value="1"/>
</dbReference>
<dbReference type="InterPro" id="IPR003817">
    <property type="entry name" value="PS_Dcarbxylase"/>
</dbReference>
<dbReference type="InterPro" id="IPR033177">
    <property type="entry name" value="PSD-B"/>
</dbReference>
<dbReference type="InterPro" id="IPR033178">
    <property type="entry name" value="PSD_type1_pro"/>
</dbReference>
<dbReference type="NCBIfam" id="TIGR00163">
    <property type="entry name" value="PS_decarb"/>
    <property type="match status" value="1"/>
</dbReference>
<dbReference type="PANTHER" id="PTHR10067">
    <property type="entry name" value="PHOSPHATIDYLSERINE DECARBOXYLASE"/>
    <property type="match status" value="1"/>
</dbReference>
<dbReference type="PANTHER" id="PTHR10067:SF6">
    <property type="entry name" value="PHOSPHATIDYLSERINE DECARBOXYLASE PROENZYME, MITOCHONDRIAL"/>
    <property type="match status" value="1"/>
</dbReference>
<dbReference type="Pfam" id="PF02666">
    <property type="entry name" value="PS_Dcarbxylase"/>
    <property type="match status" value="1"/>
</dbReference>
<proteinExistence type="inferred from homology"/>
<keyword id="KW-1003">Cell membrane</keyword>
<keyword id="KW-0210">Decarboxylase</keyword>
<keyword id="KW-0444">Lipid biosynthesis</keyword>
<keyword id="KW-0443">Lipid metabolism</keyword>
<keyword id="KW-0456">Lyase</keyword>
<keyword id="KW-0472">Membrane</keyword>
<keyword id="KW-0594">Phospholipid biosynthesis</keyword>
<keyword id="KW-1208">Phospholipid metabolism</keyword>
<keyword id="KW-0670">Pyruvate</keyword>
<keyword id="KW-1185">Reference proteome</keyword>
<keyword id="KW-0865">Zymogen</keyword>
<evidence type="ECO:0000255" key="1">
    <source>
        <dbReference type="HAMAP-Rule" id="MF_00662"/>
    </source>
</evidence>